<protein>
    <recommendedName>
        <fullName evidence="1">Holliday junction branch migration complex subunit RuvB</fullName>
        <ecNumber evidence="1">3.6.4.-</ecNumber>
    </recommendedName>
</protein>
<accession>Q92BI2</accession>
<evidence type="ECO:0000255" key="1">
    <source>
        <dbReference type="HAMAP-Rule" id="MF_00016"/>
    </source>
</evidence>
<dbReference type="EC" id="3.6.4.-" evidence="1"/>
<dbReference type="EMBL" id="AL596169">
    <property type="protein sequence ID" value="CAC96798.1"/>
    <property type="molecule type" value="Genomic_DNA"/>
</dbReference>
<dbReference type="PIR" id="AF1628">
    <property type="entry name" value="AF1628"/>
</dbReference>
<dbReference type="RefSeq" id="WP_003762401.1">
    <property type="nucleotide sequence ID" value="NC_003212.1"/>
</dbReference>
<dbReference type="SMR" id="Q92BI2"/>
<dbReference type="STRING" id="272626.gene:17565898"/>
<dbReference type="GeneID" id="93234949"/>
<dbReference type="KEGG" id="lin:ruvB"/>
<dbReference type="eggNOG" id="COG2255">
    <property type="taxonomic scope" value="Bacteria"/>
</dbReference>
<dbReference type="HOGENOM" id="CLU_055599_1_0_9"/>
<dbReference type="OrthoDB" id="9804478at2"/>
<dbReference type="Proteomes" id="UP000002513">
    <property type="component" value="Chromosome"/>
</dbReference>
<dbReference type="GO" id="GO:0005737">
    <property type="term" value="C:cytoplasm"/>
    <property type="evidence" value="ECO:0007669"/>
    <property type="project" value="UniProtKB-SubCell"/>
</dbReference>
<dbReference type="GO" id="GO:0048476">
    <property type="term" value="C:Holliday junction resolvase complex"/>
    <property type="evidence" value="ECO:0007669"/>
    <property type="project" value="UniProtKB-UniRule"/>
</dbReference>
<dbReference type="GO" id="GO:0005524">
    <property type="term" value="F:ATP binding"/>
    <property type="evidence" value="ECO:0007669"/>
    <property type="project" value="UniProtKB-UniRule"/>
</dbReference>
<dbReference type="GO" id="GO:0016887">
    <property type="term" value="F:ATP hydrolysis activity"/>
    <property type="evidence" value="ECO:0007669"/>
    <property type="project" value="InterPro"/>
</dbReference>
<dbReference type="GO" id="GO:0000400">
    <property type="term" value="F:four-way junction DNA binding"/>
    <property type="evidence" value="ECO:0007669"/>
    <property type="project" value="UniProtKB-UniRule"/>
</dbReference>
<dbReference type="GO" id="GO:0009378">
    <property type="term" value="F:four-way junction helicase activity"/>
    <property type="evidence" value="ECO:0007669"/>
    <property type="project" value="InterPro"/>
</dbReference>
<dbReference type="GO" id="GO:0006310">
    <property type="term" value="P:DNA recombination"/>
    <property type="evidence" value="ECO:0007669"/>
    <property type="project" value="UniProtKB-UniRule"/>
</dbReference>
<dbReference type="GO" id="GO:0006281">
    <property type="term" value="P:DNA repair"/>
    <property type="evidence" value="ECO:0007669"/>
    <property type="project" value="UniProtKB-UniRule"/>
</dbReference>
<dbReference type="CDD" id="cd00009">
    <property type="entry name" value="AAA"/>
    <property type="match status" value="1"/>
</dbReference>
<dbReference type="Gene3D" id="1.10.8.60">
    <property type="match status" value="1"/>
</dbReference>
<dbReference type="Gene3D" id="3.40.50.300">
    <property type="entry name" value="P-loop containing nucleotide triphosphate hydrolases"/>
    <property type="match status" value="1"/>
</dbReference>
<dbReference type="Gene3D" id="1.10.10.10">
    <property type="entry name" value="Winged helix-like DNA-binding domain superfamily/Winged helix DNA-binding domain"/>
    <property type="match status" value="1"/>
</dbReference>
<dbReference type="HAMAP" id="MF_00016">
    <property type="entry name" value="DNA_HJ_migration_RuvB"/>
    <property type="match status" value="1"/>
</dbReference>
<dbReference type="InterPro" id="IPR003593">
    <property type="entry name" value="AAA+_ATPase"/>
</dbReference>
<dbReference type="InterPro" id="IPR041445">
    <property type="entry name" value="AAA_lid_4"/>
</dbReference>
<dbReference type="InterPro" id="IPR004605">
    <property type="entry name" value="DNA_helicase_Holl-junc_RuvB"/>
</dbReference>
<dbReference type="InterPro" id="IPR027417">
    <property type="entry name" value="P-loop_NTPase"/>
</dbReference>
<dbReference type="InterPro" id="IPR008824">
    <property type="entry name" value="RuvB-like_N"/>
</dbReference>
<dbReference type="InterPro" id="IPR008823">
    <property type="entry name" value="RuvB_C"/>
</dbReference>
<dbReference type="InterPro" id="IPR036388">
    <property type="entry name" value="WH-like_DNA-bd_sf"/>
</dbReference>
<dbReference type="InterPro" id="IPR036390">
    <property type="entry name" value="WH_DNA-bd_sf"/>
</dbReference>
<dbReference type="NCBIfam" id="NF000868">
    <property type="entry name" value="PRK00080.1"/>
    <property type="match status" value="1"/>
</dbReference>
<dbReference type="NCBIfam" id="TIGR00635">
    <property type="entry name" value="ruvB"/>
    <property type="match status" value="1"/>
</dbReference>
<dbReference type="PANTHER" id="PTHR42848">
    <property type="match status" value="1"/>
</dbReference>
<dbReference type="PANTHER" id="PTHR42848:SF1">
    <property type="entry name" value="HOLLIDAY JUNCTION BRANCH MIGRATION COMPLEX SUBUNIT RUVB"/>
    <property type="match status" value="1"/>
</dbReference>
<dbReference type="Pfam" id="PF17864">
    <property type="entry name" value="AAA_lid_4"/>
    <property type="match status" value="1"/>
</dbReference>
<dbReference type="Pfam" id="PF05491">
    <property type="entry name" value="RuvB_C"/>
    <property type="match status" value="1"/>
</dbReference>
<dbReference type="Pfam" id="PF05496">
    <property type="entry name" value="RuvB_N"/>
    <property type="match status" value="1"/>
</dbReference>
<dbReference type="SMART" id="SM00382">
    <property type="entry name" value="AAA"/>
    <property type="match status" value="1"/>
</dbReference>
<dbReference type="SUPFAM" id="SSF52540">
    <property type="entry name" value="P-loop containing nucleoside triphosphate hydrolases"/>
    <property type="match status" value="1"/>
</dbReference>
<dbReference type="SUPFAM" id="SSF46785">
    <property type="entry name" value="Winged helix' DNA-binding domain"/>
    <property type="match status" value="1"/>
</dbReference>
<comment type="function">
    <text evidence="1">The RuvA-RuvB-RuvC complex processes Holliday junction (HJ) DNA during genetic recombination and DNA repair, while the RuvA-RuvB complex plays an important role in the rescue of blocked DNA replication forks via replication fork reversal (RFR). RuvA specifically binds to HJ cruciform DNA, conferring on it an open structure. The RuvB hexamer acts as an ATP-dependent pump, pulling dsDNA into and through the RuvAB complex. RuvB forms 2 homohexamers on either side of HJ DNA bound by 1 or 2 RuvA tetramers; 4 subunits per hexamer contact DNA at a time. Coordinated motions by a converter formed by DNA-disengaged RuvB subunits stimulates ATP hydrolysis and nucleotide exchange. Immobilization of the converter enables RuvB to convert the ATP-contained energy into a lever motion, pulling 2 nucleotides of DNA out of the RuvA tetramer per ATP hydrolyzed, thus driving DNA branch migration. The RuvB motors rotate together with the DNA substrate, which together with the progressing nucleotide cycle form the mechanistic basis for DNA recombination by continuous HJ branch migration. Branch migration allows RuvC to scan DNA until it finds its consensus sequence, where it cleaves and resolves cruciform DNA.</text>
</comment>
<comment type="catalytic activity">
    <reaction evidence="1">
        <text>ATP + H2O = ADP + phosphate + H(+)</text>
        <dbReference type="Rhea" id="RHEA:13065"/>
        <dbReference type="ChEBI" id="CHEBI:15377"/>
        <dbReference type="ChEBI" id="CHEBI:15378"/>
        <dbReference type="ChEBI" id="CHEBI:30616"/>
        <dbReference type="ChEBI" id="CHEBI:43474"/>
        <dbReference type="ChEBI" id="CHEBI:456216"/>
    </reaction>
</comment>
<comment type="subunit">
    <text evidence="1">Homohexamer. Forms an RuvA(8)-RuvB(12)-Holliday junction (HJ) complex. HJ DNA is sandwiched between 2 RuvA tetramers; dsDNA enters through RuvA and exits via RuvB. An RuvB hexamer assembles on each DNA strand where it exits the tetramer. Each RuvB hexamer is contacted by two RuvA subunits (via domain III) on 2 adjacent RuvB subunits; this complex drives branch migration. In the full resolvosome a probable DNA-RuvA(4)-RuvB(12)-RuvC(2) complex forms which resolves the HJ.</text>
</comment>
<comment type="subcellular location">
    <subcellularLocation>
        <location evidence="1">Cytoplasm</location>
    </subcellularLocation>
</comment>
<comment type="domain">
    <text evidence="1">Has 3 domains, the large (RuvB-L) and small ATPase (RuvB-S) domains and the C-terminal head (RuvB-H) domain. The head domain binds DNA, while the ATPase domains jointly bind ATP, ADP or are empty depending on the state of the subunit in the translocation cycle. During a single DNA translocation step the structure of each domain remains the same, but their relative positions change.</text>
</comment>
<comment type="similarity">
    <text evidence="1">Belongs to the RuvB family.</text>
</comment>
<keyword id="KW-0067">ATP-binding</keyword>
<keyword id="KW-0963">Cytoplasm</keyword>
<keyword id="KW-0227">DNA damage</keyword>
<keyword id="KW-0233">DNA recombination</keyword>
<keyword id="KW-0234">DNA repair</keyword>
<keyword id="KW-0238">DNA-binding</keyword>
<keyword id="KW-0378">Hydrolase</keyword>
<keyword id="KW-0547">Nucleotide-binding</keyword>
<reference key="1">
    <citation type="journal article" date="2001" name="Science">
        <title>Comparative genomics of Listeria species.</title>
        <authorList>
            <person name="Glaser P."/>
            <person name="Frangeul L."/>
            <person name="Buchrieser C."/>
            <person name="Rusniok C."/>
            <person name="Amend A."/>
            <person name="Baquero F."/>
            <person name="Berche P."/>
            <person name="Bloecker H."/>
            <person name="Brandt P."/>
            <person name="Chakraborty T."/>
            <person name="Charbit A."/>
            <person name="Chetouani F."/>
            <person name="Couve E."/>
            <person name="de Daruvar A."/>
            <person name="Dehoux P."/>
            <person name="Domann E."/>
            <person name="Dominguez-Bernal G."/>
            <person name="Duchaud E."/>
            <person name="Durant L."/>
            <person name="Dussurget O."/>
            <person name="Entian K.-D."/>
            <person name="Fsihi H."/>
            <person name="Garcia-del Portillo F."/>
            <person name="Garrido P."/>
            <person name="Gautier L."/>
            <person name="Goebel W."/>
            <person name="Gomez-Lopez N."/>
            <person name="Hain T."/>
            <person name="Hauf J."/>
            <person name="Jackson D."/>
            <person name="Jones L.-M."/>
            <person name="Kaerst U."/>
            <person name="Kreft J."/>
            <person name="Kuhn M."/>
            <person name="Kunst F."/>
            <person name="Kurapkat G."/>
            <person name="Madueno E."/>
            <person name="Maitournam A."/>
            <person name="Mata Vicente J."/>
            <person name="Ng E."/>
            <person name="Nedjari H."/>
            <person name="Nordsiek G."/>
            <person name="Novella S."/>
            <person name="de Pablos B."/>
            <person name="Perez-Diaz J.-C."/>
            <person name="Purcell R."/>
            <person name="Remmel B."/>
            <person name="Rose M."/>
            <person name="Schlueter T."/>
            <person name="Simoes N."/>
            <person name="Tierrez A."/>
            <person name="Vazquez-Boland J.-A."/>
            <person name="Voss H."/>
            <person name="Wehland J."/>
            <person name="Cossart P."/>
        </authorList>
    </citation>
    <scope>NUCLEOTIDE SEQUENCE [LARGE SCALE GENOMIC DNA]</scope>
    <source>
        <strain>ATCC BAA-680 / CLIP 11262</strain>
    </source>
</reference>
<gene>
    <name evidence="1" type="primary">ruvB</name>
    <name type="ordered locus">lin1567</name>
</gene>
<proteinExistence type="inferred from homology"/>
<name>RUVB_LISIN</name>
<sequence>MDERIISSETVDAEEVSFETSLRPQTLSQYIGQDKVKNNLTVFIEAATLRNEALDHVLLYGPPGLGKTTLAMVIASEMGSEIKTTSGPAIERPGDLATILTSLEPGDVLFIDEIHRLSRAIEEILYPAMEDYCLDIVIGTGPTARSVRLDLPPFTLIGATTRAGLLSAPLRDRFGVIDHLEFYTEEQLTEIVLRTSGILDTKIDDLGAREIARRSRGTPRIANRLLKRVRDFAQVRGNGTVTEKLAKEALTLLQVDPRGLDTIDQKLLHTIIQSFRGGPVGLDTIAASIGEERETIEDMQEPYLLQIGFLQRTPRGRIATETAYNHLGISYEKEV</sequence>
<organism>
    <name type="scientific">Listeria innocua serovar 6a (strain ATCC BAA-680 / CLIP 11262)</name>
    <dbReference type="NCBI Taxonomy" id="272626"/>
    <lineage>
        <taxon>Bacteria</taxon>
        <taxon>Bacillati</taxon>
        <taxon>Bacillota</taxon>
        <taxon>Bacilli</taxon>
        <taxon>Bacillales</taxon>
        <taxon>Listeriaceae</taxon>
        <taxon>Listeria</taxon>
    </lineage>
</organism>
<feature type="chain" id="PRO_0000165551" description="Holliday junction branch migration complex subunit RuvB">
    <location>
        <begin position="1"/>
        <end position="335"/>
    </location>
</feature>
<feature type="region of interest" description="Large ATPase domain (RuvB-L)" evidence="1">
    <location>
        <begin position="1"/>
        <end position="183"/>
    </location>
</feature>
<feature type="region of interest" description="Small ATPAse domain (RuvB-S)" evidence="1">
    <location>
        <begin position="184"/>
        <end position="254"/>
    </location>
</feature>
<feature type="region of interest" description="Head domain (RuvB-H)" evidence="1">
    <location>
        <begin position="257"/>
        <end position="335"/>
    </location>
</feature>
<feature type="binding site" evidence="1">
    <location>
        <position position="22"/>
    </location>
    <ligand>
        <name>ATP</name>
        <dbReference type="ChEBI" id="CHEBI:30616"/>
    </ligand>
</feature>
<feature type="binding site" evidence="1">
    <location>
        <position position="23"/>
    </location>
    <ligand>
        <name>ATP</name>
        <dbReference type="ChEBI" id="CHEBI:30616"/>
    </ligand>
</feature>
<feature type="binding site" evidence="1">
    <location>
        <position position="64"/>
    </location>
    <ligand>
        <name>ATP</name>
        <dbReference type="ChEBI" id="CHEBI:30616"/>
    </ligand>
</feature>
<feature type="binding site" evidence="1">
    <location>
        <position position="67"/>
    </location>
    <ligand>
        <name>ATP</name>
        <dbReference type="ChEBI" id="CHEBI:30616"/>
    </ligand>
</feature>
<feature type="binding site" evidence="1">
    <location>
        <position position="68"/>
    </location>
    <ligand>
        <name>ATP</name>
        <dbReference type="ChEBI" id="CHEBI:30616"/>
    </ligand>
</feature>
<feature type="binding site" evidence="1">
    <location>
        <position position="68"/>
    </location>
    <ligand>
        <name>Mg(2+)</name>
        <dbReference type="ChEBI" id="CHEBI:18420"/>
    </ligand>
</feature>
<feature type="binding site" evidence="1">
    <location>
        <position position="69"/>
    </location>
    <ligand>
        <name>ATP</name>
        <dbReference type="ChEBI" id="CHEBI:30616"/>
    </ligand>
</feature>
<feature type="binding site" evidence="1">
    <location>
        <begin position="130"/>
        <end position="132"/>
    </location>
    <ligand>
        <name>ATP</name>
        <dbReference type="ChEBI" id="CHEBI:30616"/>
    </ligand>
</feature>
<feature type="binding site" evidence="1">
    <location>
        <position position="173"/>
    </location>
    <ligand>
        <name>ATP</name>
        <dbReference type="ChEBI" id="CHEBI:30616"/>
    </ligand>
</feature>
<feature type="binding site" evidence="1">
    <location>
        <position position="183"/>
    </location>
    <ligand>
        <name>ATP</name>
        <dbReference type="ChEBI" id="CHEBI:30616"/>
    </ligand>
</feature>
<feature type="binding site" evidence="1">
    <location>
        <position position="220"/>
    </location>
    <ligand>
        <name>ATP</name>
        <dbReference type="ChEBI" id="CHEBI:30616"/>
    </ligand>
</feature>
<feature type="binding site" evidence="1">
    <location>
        <position position="293"/>
    </location>
    <ligand>
        <name>DNA</name>
        <dbReference type="ChEBI" id="CHEBI:16991"/>
    </ligand>
</feature>
<feature type="binding site" evidence="1">
    <location>
        <position position="312"/>
    </location>
    <ligand>
        <name>DNA</name>
        <dbReference type="ChEBI" id="CHEBI:16991"/>
    </ligand>
</feature>
<feature type="binding site" evidence="1">
    <location>
        <position position="317"/>
    </location>
    <ligand>
        <name>DNA</name>
        <dbReference type="ChEBI" id="CHEBI:16991"/>
    </ligand>
</feature>